<organism>
    <name type="scientific">Brucella abortus biovar 1 (strain 9-941)</name>
    <dbReference type="NCBI Taxonomy" id="262698"/>
    <lineage>
        <taxon>Bacteria</taxon>
        <taxon>Pseudomonadati</taxon>
        <taxon>Pseudomonadota</taxon>
        <taxon>Alphaproteobacteria</taxon>
        <taxon>Hyphomicrobiales</taxon>
        <taxon>Brucellaceae</taxon>
        <taxon>Brucella/Ochrobactrum group</taxon>
        <taxon>Brucella</taxon>
    </lineage>
</organism>
<feature type="chain" id="PRO_0000321340" description="Adenine phosphoribosyltransferase">
    <location>
        <begin position="1"/>
        <end position="181"/>
    </location>
</feature>
<gene>
    <name evidence="1" type="primary">apt</name>
    <name type="ordered locus">BruAb1_1529</name>
</gene>
<dbReference type="EC" id="2.4.2.7" evidence="1"/>
<dbReference type="EMBL" id="AE017223">
    <property type="protein sequence ID" value="AAX74857.1"/>
    <property type="status" value="ALT_INIT"/>
    <property type="molecule type" value="Genomic_DNA"/>
</dbReference>
<dbReference type="RefSeq" id="WP_002964645.1">
    <property type="nucleotide sequence ID" value="NC_006932.1"/>
</dbReference>
<dbReference type="SMR" id="Q57BX7"/>
<dbReference type="EnsemblBacteria" id="AAX74857">
    <property type="protein sequence ID" value="AAX74857"/>
    <property type="gene ID" value="BruAb1_1529"/>
</dbReference>
<dbReference type="KEGG" id="bmb:BruAb1_1529"/>
<dbReference type="HOGENOM" id="CLU_063339_3_0_5"/>
<dbReference type="UniPathway" id="UPA00588">
    <property type="reaction ID" value="UER00646"/>
</dbReference>
<dbReference type="Proteomes" id="UP000000540">
    <property type="component" value="Chromosome I"/>
</dbReference>
<dbReference type="GO" id="GO:0005737">
    <property type="term" value="C:cytoplasm"/>
    <property type="evidence" value="ECO:0007669"/>
    <property type="project" value="UniProtKB-SubCell"/>
</dbReference>
<dbReference type="GO" id="GO:0002055">
    <property type="term" value="F:adenine binding"/>
    <property type="evidence" value="ECO:0007669"/>
    <property type="project" value="TreeGrafter"/>
</dbReference>
<dbReference type="GO" id="GO:0003999">
    <property type="term" value="F:adenine phosphoribosyltransferase activity"/>
    <property type="evidence" value="ECO:0007669"/>
    <property type="project" value="UniProtKB-UniRule"/>
</dbReference>
<dbReference type="GO" id="GO:0016208">
    <property type="term" value="F:AMP binding"/>
    <property type="evidence" value="ECO:0007669"/>
    <property type="project" value="TreeGrafter"/>
</dbReference>
<dbReference type="GO" id="GO:0006168">
    <property type="term" value="P:adenine salvage"/>
    <property type="evidence" value="ECO:0007669"/>
    <property type="project" value="InterPro"/>
</dbReference>
<dbReference type="GO" id="GO:0044209">
    <property type="term" value="P:AMP salvage"/>
    <property type="evidence" value="ECO:0007669"/>
    <property type="project" value="UniProtKB-UniRule"/>
</dbReference>
<dbReference type="GO" id="GO:0006166">
    <property type="term" value="P:purine ribonucleoside salvage"/>
    <property type="evidence" value="ECO:0007669"/>
    <property type="project" value="UniProtKB-KW"/>
</dbReference>
<dbReference type="CDD" id="cd06223">
    <property type="entry name" value="PRTases_typeI"/>
    <property type="match status" value="1"/>
</dbReference>
<dbReference type="FunFam" id="3.40.50.2020:FF:000021">
    <property type="entry name" value="Adenine phosphoribosyltransferase"/>
    <property type="match status" value="1"/>
</dbReference>
<dbReference type="Gene3D" id="3.40.50.2020">
    <property type="match status" value="1"/>
</dbReference>
<dbReference type="HAMAP" id="MF_00004">
    <property type="entry name" value="Aden_phosphoribosyltr"/>
    <property type="match status" value="1"/>
</dbReference>
<dbReference type="InterPro" id="IPR005764">
    <property type="entry name" value="Ade_phspho_trans"/>
</dbReference>
<dbReference type="InterPro" id="IPR000836">
    <property type="entry name" value="PRibTrfase_dom"/>
</dbReference>
<dbReference type="InterPro" id="IPR029057">
    <property type="entry name" value="PRTase-like"/>
</dbReference>
<dbReference type="InterPro" id="IPR050054">
    <property type="entry name" value="UPRTase/APRTase"/>
</dbReference>
<dbReference type="NCBIfam" id="TIGR01090">
    <property type="entry name" value="apt"/>
    <property type="match status" value="1"/>
</dbReference>
<dbReference type="NCBIfam" id="NF002634">
    <property type="entry name" value="PRK02304.1-3"/>
    <property type="match status" value="1"/>
</dbReference>
<dbReference type="NCBIfam" id="NF002636">
    <property type="entry name" value="PRK02304.1-5"/>
    <property type="match status" value="1"/>
</dbReference>
<dbReference type="PANTHER" id="PTHR32315">
    <property type="entry name" value="ADENINE PHOSPHORIBOSYLTRANSFERASE"/>
    <property type="match status" value="1"/>
</dbReference>
<dbReference type="PANTHER" id="PTHR32315:SF3">
    <property type="entry name" value="ADENINE PHOSPHORIBOSYLTRANSFERASE"/>
    <property type="match status" value="1"/>
</dbReference>
<dbReference type="Pfam" id="PF00156">
    <property type="entry name" value="Pribosyltran"/>
    <property type="match status" value="1"/>
</dbReference>
<dbReference type="SUPFAM" id="SSF53271">
    <property type="entry name" value="PRTase-like"/>
    <property type="match status" value="1"/>
</dbReference>
<dbReference type="PROSITE" id="PS00103">
    <property type="entry name" value="PUR_PYR_PR_TRANSFER"/>
    <property type="match status" value="1"/>
</dbReference>
<sequence length="181" mass="19614">MESGFKVTLKDAIRTIPDYPKPGVQFRDVTTLMGNAQAFRRAVDELVYPYAGNRIDKVAGIEARGFILGGAIAHQLSAGFVPIRKKGKLPRDTVRIAYSLEYGVDEMEMHRDAIEKGERVVLVDDLIATGGTAEAAAKLLLQMGAEIVAACFIIDLPDLGGRKKLEALGLPVRTLVAFEGD</sequence>
<proteinExistence type="inferred from homology"/>
<name>APT_BRUAB</name>
<comment type="function">
    <text evidence="1">Catalyzes a salvage reaction resulting in the formation of AMP, that is energically less costly than de novo synthesis.</text>
</comment>
<comment type="catalytic activity">
    <reaction evidence="1">
        <text>AMP + diphosphate = 5-phospho-alpha-D-ribose 1-diphosphate + adenine</text>
        <dbReference type="Rhea" id="RHEA:16609"/>
        <dbReference type="ChEBI" id="CHEBI:16708"/>
        <dbReference type="ChEBI" id="CHEBI:33019"/>
        <dbReference type="ChEBI" id="CHEBI:58017"/>
        <dbReference type="ChEBI" id="CHEBI:456215"/>
        <dbReference type="EC" id="2.4.2.7"/>
    </reaction>
</comment>
<comment type="pathway">
    <text evidence="1">Purine metabolism; AMP biosynthesis via salvage pathway; AMP from adenine: step 1/1.</text>
</comment>
<comment type="subunit">
    <text evidence="1">Homodimer.</text>
</comment>
<comment type="subcellular location">
    <subcellularLocation>
        <location evidence="1">Cytoplasm</location>
    </subcellularLocation>
</comment>
<comment type="similarity">
    <text evidence="1">Belongs to the purine/pyrimidine phosphoribosyltransferase family.</text>
</comment>
<comment type="sequence caution" evidence="2">
    <conflict type="erroneous initiation">
        <sequence resource="EMBL-CDS" id="AAX74857"/>
    </conflict>
</comment>
<reference key="1">
    <citation type="journal article" date="2005" name="J. Bacteriol.">
        <title>Completion of the genome sequence of Brucella abortus and comparison to the highly similar genomes of Brucella melitensis and Brucella suis.</title>
        <authorList>
            <person name="Halling S.M."/>
            <person name="Peterson-Burch B.D."/>
            <person name="Bricker B.J."/>
            <person name="Zuerner R.L."/>
            <person name="Qing Z."/>
            <person name="Li L.-L."/>
            <person name="Kapur V."/>
            <person name="Alt D.P."/>
            <person name="Olsen S.C."/>
        </authorList>
    </citation>
    <scope>NUCLEOTIDE SEQUENCE [LARGE SCALE GENOMIC DNA]</scope>
    <source>
        <strain>9-941</strain>
    </source>
</reference>
<keyword id="KW-0963">Cytoplasm</keyword>
<keyword id="KW-0328">Glycosyltransferase</keyword>
<keyword id="KW-0660">Purine salvage</keyword>
<keyword id="KW-0808">Transferase</keyword>
<protein>
    <recommendedName>
        <fullName evidence="1">Adenine phosphoribosyltransferase</fullName>
        <shortName evidence="1">APRT</shortName>
        <ecNumber evidence="1">2.4.2.7</ecNumber>
    </recommendedName>
</protein>
<evidence type="ECO:0000255" key="1">
    <source>
        <dbReference type="HAMAP-Rule" id="MF_00004"/>
    </source>
</evidence>
<evidence type="ECO:0000305" key="2"/>
<accession>Q57BX7</accession>